<reference key="1">
    <citation type="submission" date="2008-01" db="EMBL/GenBank/DDBJ databases">
        <title>Complete sequence of Thermoanaerobacter pseudethanolicus 39E.</title>
        <authorList>
            <person name="Copeland A."/>
            <person name="Lucas S."/>
            <person name="Lapidus A."/>
            <person name="Barry K."/>
            <person name="Glavina del Rio T."/>
            <person name="Dalin E."/>
            <person name="Tice H."/>
            <person name="Pitluck S."/>
            <person name="Bruce D."/>
            <person name="Goodwin L."/>
            <person name="Saunders E."/>
            <person name="Brettin T."/>
            <person name="Detter J.C."/>
            <person name="Han C."/>
            <person name="Schmutz J."/>
            <person name="Larimer F."/>
            <person name="Land M."/>
            <person name="Hauser L."/>
            <person name="Kyrpides N."/>
            <person name="Lykidis A."/>
            <person name="Hemme C."/>
            <person name="Fields M.W."/>
            <person name="He Z."/>
            <person name="Zhou J."/>
            <person name="Richardson P."/>
        </authorList>
    </citation>
    <scope>NUCLEOTIDE SEQUENCE [LARGE SCALE GENOMIC DNA]</scope>
    <source>
        <strain>ATCC 33223 / DSM 2355 / 39E</strain>
    </source>
</reference>
<evidence type="ECO:0000255" key="1">
    <source>
        <dbReference type="HAMAP-Rule" id="MF_00074"/>
    </source>
</evidence>
<accession>B0K8H7</accession>
<sequence length="240" mass="27636">MKNKSVEMLIEGAKEWGIFLEMFHVEHFQKYYALLLEWNQKMNLTAITEESEVVIKHFLDSLSVVKSGKIKEEEKIIDVGTGAGFPCIPLKIVFPKLKATLLDSSKKRITFLEEVINKLGINEIELIHGRAEDIGKDIKYREQFDLSMARAVAPLNILLEYTLPFVKVDGYFIALKGREIEEEIENSQRALKELKGEIEEVKEIKLPYSDIVHHLVIIKKIDNCPTKYPRRANAIQRSPL</sequence>
<gene>
    <name evidence="1" type="primary">rsmG</name>
    <name type="ordered locus">Teth39_2288</name>
</gene>
<protein>
    <recommendedName>
        <fullName evidence="1">Ribosomal RNA small subunit methyltransferase G</fullName>
        <ecNumber evidence="1">2.1.1.-</ecNumber>
    </recommendedName>
    <alternativeName>
        <fullName evidence="1">16S rRNA 7-methylguanosine methyltransferase</fullName>
        <shortName evidence="1">16S rRNA m7G methyltransferase</shortName>
    </alternativeName>
</protein>
<organism>
    <name type="scientific">Thermoanaerobacter pseudethanolicus (strain ATCC 33223 / 39E)</name>
    <name type="common">Clostridium thermohydrosulfuricum</name>
    <dbReference type="NCBI Taxonomy" id="340099"/>
    <lineage>
        <taxon>Bacteria</taxon>
        <taxon>Bacillati</taxon>
        <taxon>Bacillota</taxon>
        <taxon>Clostridia</taxon>
        <taxon>Thermoanaerobacterales</taxon>
        <taxon>Thermoanaerobacteraceae</taxon>
        <taxon>Thermoanaerobacter</taxon>
    </lineage>
</organism>
<dbReference type="EC" id="2.1.1.-" evidence="1"/>
<dbReference type="EMBL" id="CP000924">
    <property type="protein sequence ID" value="ABY95909.1"/>
    <property type="molecule type" value="Genomic_DNA"/>
</dbReference>
<dbReference type="RefSeq" id="WP_012269838.1">
    <property type="nucleotide sequence ID" value="NC_010321.1"/>
</dbReference>
<dbReference type="SMR" id="B0K8H7"/>
<dbReference type="STRING" id="340099.Teth39_2288"/>
<dbReference type="KEGG" id="tpd:Teth39_2288"/>
<dbReference type="eggNOG" id="COG0357">
    <property type="taxonomic scope" value="Bacteria"/>
</dbReference>
<dbReference type="HOGENOM" id="CLU_065341_0_0_9"/>
<dbReference type="Proteomes" id="UP000002156">
    <property type="component" value="Chromosome"/>
</dbReference>
<dbReference type="GO" id="GO:0005829">
    <property type="term" value="C:cytosol"/>
    <property type="evidence" value="ECO:0007669"/>
    <property type="project" value="TreeGrafter"/>
</dbReference>
<dbReference type="GO" id="GO:0070043">
    <property type="term" value="F:rRNA (guanine-N7-)-methyltransferase activity"/>
    <property type="evidence" value="ECO:0007669"/>
    <property type="project" value="UniProtKB-UniRule"/>
</dbReference>
<dbReference type="CDD" id="cd02440">
    <property type="entry name" value="AdoMet_MTases"/>
    <property type="match status" value="1"/>
</dbReference>
<dbReference type="FunFam" id="3.40.50.150:FF:000041">
    <property type="entry name" value="Ribosomal RNA small subunit methyltransferase G"/>
    <property type="match status" value="1"/>
</dbReference>
<dbReference type="Gene3D" id="3.40.50.150">
    <property type="entry name" value="Vaccinia Virus protein VP39"/>
    <property type="match status" value="1"/>
</dbReference>
<dbReference type="HAMAP" id="MF_00074">
    <property type="entry name" value="16SrRNA_methyltr_G"/>
    <property type="match status" value="1"/>
</dbReference>
<dbReference type="InterPro" id="IPR003682">
    <property type="entry name" value="rRNA_ssu_MeTfrase_G"/>
</dbReference>
<dbReference type="InterPro" id="IPR029063">
    <property type="entry name" value="SAM-dependent_MTases_sf"/>
</dbReference>
<dbReference type="NCBIfam" id="TIGR00138">
    <property type="entry name" value="rsmG_gidB"/>
    <property type="match status" value="1"/>
</dbReference>
<dbReference type="PANTHER" id="PTHR31760">
    <property type="entry name" value="S-ADENOSYL-L-METHIONINE-DEPENDENT METHYLTRANSFERASES SUPERFAMILY PROTEIN"/>
    <property type="match status" value="1"/>
</dbReference>
<dbReference type="PANTHER" id="PTHR31760:SF0">
    <property type="entry name" value="S-ADENOSYL-L-METHIONINE-DEPENDENT METHYLTRANSFERASES SUPERFAMILY PROTEIN"/>
    <property type="match status" value="1"/>
</dbReference>
<dbReference type="Pfam" id="PF02527">
    <property type="entry name" value="GidB"/>
    <property type="match status" value="1"/>
</dbReference>
<dbReference type="PIRSF" id="PIRSF003078">
    <property type="entry name" value="GidB"/>
    <property type="match status" value="1"/>
</dbReference>
<dbReference type="SUPFAM" id="SSF53335">
    <property type="entry name" value="S-adenosyl-L-methionine-dependent methyltransferases"/>
    <property type="match status" value="1"/>
</dbReference>
<comment type="function">
    <text evidence="1">Specifically methylates the N7 position of a guanine in 16S rRNA.</text>
</comment>
<comment type="subcellular location">
    <subcellularLocation>
        <location evidence="1">Cytoplasm</location>
    </subcellularLocation>
</comment>
<comment type="similarity">
    <text evidence="1">Belongs to the methyltransferase superfamily. RNA methyltransferase RsmG family.</text>
</comment>
<name>RSMG_THEP3</name>
<feature type="chain" id="PRO_0000342939" description="Ribosomal RNA small subunit methyltransferase G">
    <location>
        <begin position="1"/>
        <end position="240"/>
    </location>
</feature>
<feature type="binding site" evidence="1">
    <location>
        <position position="80"/>
    </location>
    <ligand>
        <name>S-adenosyl-L-methionine</name>
        <dbReference type="ChEBI" id="CHEBI:59789"/>
    </ligand>
</feature>
<feature type="binding site" evidence="1">
    <location>
        <position position="85"/>
    </location>
    <ligand>
        <name>S-adenosyl-L-methionine</name>
        <dbReference type="ChEBI" id="CHEBI:59789"/>
    </ligand>
</feature>
<feature type="binding site" evidence="1">
    <location>
        <begin position="103"/>
        <end position="105"/>
    </location>
    <ligand>
        <name>S-adenosyl-L-methionine</name>
        <dbReference type="ChEBI" id="CHEBI:59789"/>
    </ligand>
</feature>
<feature type="binding site" evidence="1">
    <location>
        <begin position="131"/>
        <end position="132"/>
    </location>
    <ligand>
        <name>S-adenosyl-L-methionine</name>
        <dbReference type="ChEBI" id="CHEBI:59789"/>
    </ligand>
</feature>
<feature type="binding site" evidence="1">
    <location>
        <position position="150"/>
    </location>
    <ligand>
        <name>S-adenosyl-L-methionine</name>
        <dbReference type="ChEBI" id="CHEBI:59789"/>
    </ligand>
</feature>
<proteinExistence type="inferred from homology"/>
<keyword id="KW-0963">Cytoplasm</keyword>
<keyword id="KW-0489">Methyltransferase</keyword>
<keyword id="KW-1185">Reference proteome</keyword>
<keyword id="KW-0698">rRNA processing</keyword>
<keyword id="KW-0949">S-adenosyl-L-methionine</keyword>
<keyword id="KW-0808">Transferase</keyword>